<reference key="1">
    <citation type="journal article" date="2006" name="Appl. Environ. Microbiol.">
        <title>Genome sequence of the chemolithoautotrophic nitrite-oxidizing bacterium Nitrobacter winogradskyi Nb-255.</title>
        <authorList>
            <person name="Starkenburg S.R."/>
            <person name="Chain P.S.G."/>
            <person name="Sayavedra-Soto L.A."/>
            <person name="Hauser L."/>
            <person name="Land M.L."/>
            <person name="Larimer F.W."/>
            <person name="Malfatti S.A."/>
            <person name="Klotz M.G."/>
            <person name="Bottomley P.J."/>
            <person name="Arp D.J."/>
            <person name="Hickey W.J."/>
        </authorList>
    </citation>
    <scope>NUCLEOTIDE SEQUENCE [LARGE SCALE GENOMIC DNA]</scope>
    <source>
        <strain>ATCC 25391 / DSM 10237 / CIP 104748 / NCIMB 11846 / Nb-255</strain>
    </source>
</reference>
<organism>
    <name type="scientific">Nitrobacter winogradskyi (strain ATCC 25391 / DSM 10237 / CIP 104748 / NCIMB 11846 / Nb-255)</name>
    <dbReference type="NCBI Taxonomy" id="323098"/>
    <lineage>
        <taxon>Bacteria</taxon>
        <taxon>Pseudomonadati</taxon>
        <taxon>Pseudomonadota</taxon>
        <taxon>Alphaproteobacteria</taxon>
        <taxon>Hyphomicrobiales</taxon>
        <taxon>Nitrobacteraceae</taxon>
        <taxon>Nitrobacter</taxon>
    </lineage>
</organism>
<gene>
    <name evidence="1" type="primary">fabA</name>
    <name type="ordered locus">Nwi_0034</name>
</gene>
<sequence length="174" mass="19095">MQDRRSSYDYEGLLACGRGELFGPGNAQLPLPPMLMFDRITDINEDGGEFGKGLIRAELDVKPDLWFFGCHFKGDPVMPGCLGLDALWQMVGFFLGWTGGEGRGRALGLGELKFTGQVLPPVRKVVYNVDIKRVMRSKLVLGIADGWLSADDDIIYRAKDLKVGLFKQDAGPGA</sequence>
<accession>Q3SWN9</accession>
<protein>
    <recommendedName>
        <fullName evidence="1">3-hydroxydecanoyl-[acyl-carrier-protein] dehydratase</fullName>
        <ecNumber evidence="1">4.2.1.59</ecNumber>
    </recommendedName>
    <alternativeName>
        <fullName evidence="1">3-hydroxyacyl-[acyl-carrier-protein] dehydratase FabA</fullName>
    </alternativeName>
    <alternativeName>
        <fullName evidence="1">Beta-hydroxydecanoyl thioester dehydrase</fullName>
    </alternativeName>
    <alternativeName>
        <fullName evidence="1">Trans-2-decenoyl-[acyl-carrier-protein] isomerase</fullName>
        <ecNumber evidence="1">5.3.3.14</ecNumber>
    </alternativeName>
</protein>
<proteinExistence type="inferred from homology"/>
<dbReference type="EC" id="4.2.1.59" evidence="1"/>
<dbReference type="EC" id="5.3.3.14" evidence="1"/>
<dbReference type="EMBL" id="CP000115">
    <property type="protein sequence ID" value="ABA03302.1"/>
    <property type="molecule type" value="Genomic_DNA"/>
</dbReference>
<dbReference type="RefSeq" id="WP_011313373.1">
    <property type="nucleotide sequence ID" value="NC_007406.1"/>
</dbReference>
<dbReference type="SMR" id="Q3SWN9"/>
<dbReference type="STRING" id="323098.Nwi_0034"/>
<dbReference type="KEGG" id="nwi:Nwi_0034"/>
<dbReference type="eggNOG" id="COG0764">
    <property type="taxonomic scope" value="Bacteria"/>
</dbReference>
<dbReference type="HOGENOM" id="CLU_097925_0_0_5"/>
<dbReference type="OrthoDB" id="9786735at2"/>
<dbReference type="UniPathway" id="UPA00094"/>
<dbReference type="Proteomes" id="UP000002531">
    <property type="component" value="Chromosome"/>
</dbReference>
<dbReference type="GO" id="GO:0005737">
    <property type="term" value="C:cytoplasm"/>
    <property type="evidence" value="ECO:0007669"/>
    <property type="project" value="UniProtKB-SubCell"/>
</dbReference>
<dbReference type="GO" id="GO:0019171">
    <property type="term" value="F:(3R)-hydroxyacyl-[acyl-carrier-protein] dehydratase activity"/>
    <property type="evidence" value="ECO:0007669"/>
    <property type="project" value="UniProtKB-UniRule"/>
</dbReference>
<dbReference type="GO" id="GO:0034017">
    <property type="term" value="F:trans-2-decenoyl-acyl-carrier-protein isomerase activity"/>
    <property type="evidence" value="ECO:0007669"/>
    <property type="project" value="UniProtKB-UniRule"/>
</dbReference>
<dbReference type="GO" id="GO:0006636">
    <property type="term" value="P:unsaturated fatty acid biosynthetic process"/>
    <property type="evidence" value="ECO:0007669"/>
    <property type="project" value="UniProtKB-UniRule"/>
</dbReference>
<dbReference type="CDD" id="cd01287">
    <property type="entry name" value="FabA"/>
    <property type="match status" value="1"/>
</dbReference>
<dbReference type="Gene3D" id="3.10.129.10">
    <property type="entry name" value="Hotdog Thioesterase"/>
    <property type="match status" value="1"/>
</dbReference>
<dbReference type="HAMAP" id="MF_00405">
    <property type="entry name" value="FabA"/>
    <property type="match status" value="1"/>
</dbReference>
<dbReference type="InterPro" id="IPR010083">
    <property type="entry name" value="FabA"/>
</dbReference>
<dbReference type="InterPro" id="IPR013114">
    <property type="entry name" value="FabA_FabZ"/>
</dbReference>
<dbReference type="InterPro" id="IPR029069">
    <property type="entry name" value="HotDog_dom_sf"/>
</dbReference>
<dbReference type="NCBIfam" id="TIGR01749">
    <property type="entry name" value="fabA"/>
    <property type="match status" value="1"/>
</dbReference>
<dbReference type="NCBIfam" id="NF003509">
    <property type="entry name" value="PRK05174.1"/>
    <property type="match status" value="1"/>
</dbReference>
<dbReference type="PANTHER" id="PTHR30272">
    <property type="entry name" value="3-HYDROXYACYL-[ACYL-CARRIER-PROTEIN] DEHYDRATASE"/>
    <property type="match status" value="1"/>
</dbReference>
<dbReference type="PANTHER" id="PTHR30272:SF8">
    <property type="entry name" value="3-HYDROXYDECANOYL-[ACYL-CARRIER-PROTEIN] DEHYDRATASE"/>
    <property type="match status" value="1"/>
</dbReference>
<dbReference type="Pfam" id="PF07977">
    <property type="entry name" value="FabA"/>
    <property type="match status" value="1"/>
</dbReference>
<dbReference type="SUPFAM" id="SSF54637">
    <property type="entry name" value="Thioesterase/thiol ester dehydrase-isomerase"/>
    <property type="match status" value="1"/>
</dbReference>
<comment type="function">
    <text evidence="1">Necessary for the introduction of cis unsaturation into fatty acids. Catalyzes the dehydration of (3R)-3-hydroxydecanoyl-ACP to E-(2)-decenoyl-ACP and then its isomerization to Z-(3)-decenoyl-ACP. Can catalyze the dehydratase reaction for beta-hydroxyacyl-ACPs with saturated chain lengths up to 16:0, being most active on intermediate chain length.</text>
</comment>
<comment type="catalytic activity">
    <reaction evidence="1">
        <text>a (3R)-hydroxyacyl-[ACP] = a (2E)-enoyl-[ACP] + H2O</text>
        <dbReference type="Rhea" id="RHEA:13097"/>
        <dbReference type="Rhea" id="RHEA-COMP:9925"/>
        <dbReference type="Rhea" id="RHEA-COMP:9945"/>
        <dbReference type="ChEBI" id="CHEBI:15377"/>
        <dbReference type="ChEBI" id="CHEBI:78784"/>
        <dbReference type="ChEBI" id="CHEBI:78827"/>
        <dbReference type="EC" id="4.2.1.59"/>
    </reaction>
</comment>
<comment type="catalytic activity">
    <reaction evidence="1">
        <text>(3R)-hydroxydecanoyl-[ACP] = (2E)-decenoyl-[ACP] + H2O</text>
        <dbReference type="Rhea" id="RHEA:41860"/>
        <dbReference type="Rhea" id="RHEA-COMP:9638"/>
        <dbReference type="Rhea" id="RHEA-COMP:9639"/>
        <dbReference type="ChEBI" id="CHEBI:15377"/>
        <dbReference type="ChEBI" id="CHEBI:78466"/>
        <dbReference type="ChEBI" id="CHEBI:78467"/>
    </reaction>
</comment>
<comment type="catalytic activity">
    <reaction evidence="1">
        <text>(2E)-decenoyl-[ACP] = (3Z)-decenoyl-[ACP]</text>
        <dbReference type="Rhea" id="RHEA:23568"/>
        <dbReference type="Rhea" id="RHEA-COMP:9639"/>
        <dbReference type="Rhea" id="RHEA-COMP:9927"/>
        <dbReference type="ChEBI" id="CHEBI:78467"/>
        <dbReference type="ChEBI" id="CHEBI:78798"/>
        <dbReference type="EC" id="5.3.3.14"/>
    </reaction>
</comment>
<comment type="pathway">
    <text evidence="1">Lipid metabolism; fatty acid biosynthesis.</text>
</comment>
<comment type="subunit">
    <text evidence="1">Homodimer.</text>
</comment>
<comment type="subcellular location">
    <subcellularLocation>
        <location evidence="1">Cytoplasm</location>
    </subcellularLocation>
</comment>
<comment type="similarity">
    <text evidence="1">Belongs to the thioester dehydratase family. FabA subfamily.</text>
</comment>
<feature type="chain" id="PRO_0000267737" description="3-hydroxydecanoyl-[acyl-carrier-protein] dehydratase">
    <location>
        <begin position="1"/>
        <end position="174"/>
    </location>
</feature>
<feature type="active site" evidence="1">
    <location>
        <position position="71"/>
    </location>
</feature>
<keyword id="KW-0963">Cytoplasm</keyword>
<keyword id="KW-0275">Fatty acid biosynthesis</keyword>
<keyword id="KW-0276">Fatty acid metabolism</keyword>
<keyword id="KW-0413">Isomerase</keyword>
<keyword id="KW-0444">Lipid biosynthesis</keyword>
<keyword id="KW-0443">Lipid metabolism</keyword>
<keyword id="KW-0456">Lyase</keyword>
<keyword id="KW-1185">Reference proteome</keyword>
<name>FABA_NITWN</name>
<evidence type="ECO:0000255" key="1">
    <source>
        <dbReference type="HAMAP-Rule" id="MF_00405"/>
    </source>
</evidence>